<gene>
    <name evidence="1" type="primary">kefF</name>
    <name type="ordered locus">EC55989_0046</name>
</gene>
<comment type="function">
    <text evidence="1">Regulatory subunit of a potassium efflux system that confers protection against electrophiles. Required for full activity of KefC. Shows redox enzymatic activity, but this enzymatic activity is not required for activation of KefC.</text>
</comment>
<comment type="catalytic activity">
    <reaction evidence="1">
        <text>a quinone + NADH + H(+) = a quinol + NAD(+)</text>
        <dbReference type="Rhea" id="RHEA:46160"/>
        <dbReference type="ChEBI" id="CHEBI:15378"/>
        <dbReference type="ChEBI" id="CHEBI:24646"/>
        <dbReference type="ChEBI" id="CHEBI:57540"/>
        <dbReference type="ChEBI" id="CHEBI:57945"/>
        <dbReference type="ChEBI" id="CHEBI:132124"/>
        <dbReference type="EC" id="1.6.5.2"/>
    </reaction>
</comment>
<comment type="catalytic activity">
    <reaction evidence="1">
        <text>a quinone + NADPH + H(+) = a quinol + NADP(+)</text>
        <dbReference type="Rhea" id="RHEA:46164"/>
        <dbReference type="ChEBI" id="CHEBI:15378"/>
        <dbReference type="ChEBI" id="CHEBI:24646"/>
        <dbReference type="ChEBI" id="CHEBI:57783"/>
        <dbReference type="ChEBI" id="CHEBI:58349"/>
        <dbReference type="ChEBI" id="CHEBI:132124"/>
        <dbReference type="EC" id="1.6.5.2"/>
    </reaction>
</comment>
<comment type="cofactor">
    <cofactor evidence="1">
        <name>FMN</name>
        <dbReference type="ChEBI" id="CHEBI:58210"/>
    </cofactor>
</comment>
<comment type="subunit">
    <text evidence="1">Homodimer. Interacts with KefC.</text>
</comment>
<comment type="subcellular location">
    <subcellularLocation>
        <location evidence="1">Cell inner membrane</location>
        <topology evidence="1">Peripheral membrane protein</topology>
        <orientation evidence="1">Cytoplasmic side</orientation>
    </subcellularLocation>
</comment>
<comment type="similarity">
    <text evidence="1">Belongs to the NAD(P)H dehydrogenase (quinone) family. KefF subfamily.</text>
</comment>
<accession>B7L4G9</accession>
<protein>
    <recommendedName>
        <fullName evidence="1">Glutathione-regulated potassium-efflux system ancillary protein KefF</fullName>
    </recommendedName>
    <alternativeName>
        <fullName evidence="1">Quinone oxidoreductase KefF</fullName>
        <ecNumber evidence="1">1.6.5.2</ecNumber>
    </alternativeName>
</protein>
<reference key="1">
    <citation type="journal article" date="2009" name="PLoS Genet.">
        <title>Organised genome dynamics in the Escherichia coli species results in highly diverse adaptive paths.</title>
        <authorList>
            <person name="Touchon M."/>
            <person name="Hoede C."/>
            <person name="Tenaillon O."/>
            <person name="Barbe V."/>
            <person name="Baeriswyl S."/>
            <person name="Bidet P."/>
            <person name="Bingen E."/>
            <person name="Bonacorsi S."/>
            <person name="Bouchier C."/>
            <person name="Bouvet O."/>
            <person name="Calteau A."/>
            <person name="Chiapello H."/>
            <person name="Clermont O."/>
            <person name="Cruveiller S."/>
            <person name="Danchin A."/>
            <person name="Diard M."/>
            <person name="Dossat C."/>
            <person name="Karoui M.E."/>
            <person name="Frapy E."/>
            <person name="Garry L."/>
            <person name="Ghigo J.M."/>
            <person name="Gilles A.M."/>
            <person name="Johnson J."/>
            <person name="Le Bouguenec C."/>
            <person name="Lescat M."/>
            <person name="Mangenot S."/>
            <person name="Martinez-Jehanne V."/>
            <person name="Matic I."/>
            <person name="Nassif X."/>
            <person name="Oztas S."/>
            <person name="Petit M.A."/>
            <person name="Pichon C."/>
            <person name="Rouy Z."/>
            <person name="Ruf C.S."/>
            <person name="Schneider D."/>
            <person name="Tourret J."/>
            <person name="Vacherie B."/>
            <person name="Vallenet D."/>
            <person name="Medigue C."/>
            <person name="Rocha E.P.C."/>
            <person name="Denamur E."/>
        </authorList>
    </citation>
    <scope>NUCLEOTIDE SEQUENCE [LARGE SCALE GENOMIC DNA]</scope>
    <source>
        <strain>55989 / EAEC</strain>
    </source>
</reference>
<evidence type="ECO:0000255" key="1">
    <source>
        <dbReference type="HAMAP-Rule" id="MF_01414"/>
    </source>
</evidence>
<organism>
    <name type="scientific">Escherichia coli (strain 55989 / EAEC)</name>
    <dbReference type="NCBI Taxonomy" id="585055"/>
    <lineage>
        <taxon>Bacteria</taxon>
        <taxon>Pseudomonadati</taxon>
        <taxon>Pseudomonadota</taxon>
        <taxon>Gammaproteobacteria</taxon>
        <taxon>Enterobacterales</taxon>
        <taxon>Enterobacteriaceae</taxon>
        <taxon>Escherichia</taxon>
    </lineage>
</organism>
<dbReference type="EC" id="1.6.5.2" evidence="1"/>
<dbReference type="EMBL" id="CU928145">
    <property type="protein sequence ID" value="CAU95933.1"/>
    <property type="molecule type" value="Genomic_DNA"/>
</dbReference>
<dbReference type="RefSeq" id="WP_000600725.1">
    <property type="nucleotide sequence ID" value="NZ_CP028304.1"/>
</dbReference>
<dbReference type="SMR" id="B7L4G9"/>
<dbReference type="GeneID" id="89519427"/>
<dbReference type="KEGG" id="eck:EC55989_0046"/>
<dbReference type="HOGENOM" id="CLU_058643_0_2_6"/>
<dbReference type="Proteomes" id="UP000000746">
    <property type="component" value="Chromosome"/>
</dbReference>
<dbReference type="GO" id="GO:0005886">
    <property type="term" value="C:plasma membrane"/>
    <property type="evidence" value="ECO:0007669"/>
    <property type="project" value="UniProtKB-SubCell"/>
</dbReference>
<dbReference type="GO" id="GO:0009055">
    <property type="term" value="F:electron transfer activity"/>
    <property type="evidence" value="ECO:0007669"/>
    <property type="project" value="TreeGrafter"/>
</dbReference>
<dbReference type="GO" id="GO:0010181">
    <property type="term" value="F:FMN binding"/>
    <property type="evidence" value="ECO:0007669"/>
    <property type="project" value="UniProtKB-UniRule"/>
</dbReference>
<dbReference type="GO" id="GO:0050136">
    <property type="term" value="F:NADH:ubiquinone reductase (non-electrogenic) activity"/>
    <property type="evidence" value="ECO:0007669"/>
    <property type="project" value="RHEA"/>
</dbReference>
<dbReference type="GO" id="GO:0008753">
    <property type="term" value="F:NADPH dehydrogenase (quinone) activity"/>
    <property type="evidence" value="ECO:0007669"/>
    <property type="project" value="RHEA"/>
</dbReference>
<dbReference type="GO" id="GO:1901381">
    <property type="term" value="P:positive regulation of potassium ion transmembrane transport"/>
    <property type="evidence" value="ECO:0007669"/>
    <property type="project" value="UniProtKB-UniRule"/>
</dbReference>
<dbReference type="GO" id="GO:0006813">
    <property type="term" value="P:potassium ion transport"/>
    <property type="evidence" value="ECO:0007669"/>
    <property type="project" value="InterPro"/>
</dbReference>
<dbReference type="FunFam" id="3.40.50.360:FF:000008">
    <property type="entry name" value="Glutathione-regulated potassium-efflux system ancillary protein KefF"/>
    <property type="match status" value="1"/>
</dbReference>
<dbReference type="Gene3D" id="3.40.50.360">
    <property type="match status" value="1"/>
</dbReference>
<dbReference type="HAMAP" id="MF_01414">
    <property type="entry name" value="K_H_efflux_KefF"/>
    <property type="match status" value="1"/>
</dbReference>
<dbReference type="InterPro" id="IPR003680">
    <property type="entry name" value="Flavodoxin_fold"/>
</dbReference>
<dbReference type="InterPro" id="IPR029039">
    <property type="entry name" value="Flavoprotein-like_sf"/>
</dbReference>
<dbReference type="InterPro" id="IPR023948">
    <property type="entry name" value="K_H_efflux_KefF"/>
</dbReference>
<dbReference type="InterPro" id="IPR046980">
    <property type="entry name" value="KefG/KefF"/>
</dbReference>
<dbReference type="NCBIfam" id="NF002044">
    <property type="entry name" value="PRK00871.1"/>
    <property type="match status" value="1"/>
</dbReference>
<dbReference type="PANTHER" id="PTHR47307:SF2">
    <property type="entry name" value="GLUTATHIONE-REGULATED POTASSIUM-EFFLUX SYSTEM ANCILLARY PROTEIN KEFF"/>
    <property type="match status" value="1"/>
</dbReference>
<dbReference type="PANTHER" id="PTHR47307">
    <property type="entry name" value="GLUTATHIONE-REGULATED POTASSIUM-EFFLUX SYSTEM ANCILLARY PROTEIN KEFG"/>
    <property type="match status" value="1"/>
</dbReference>
<dbReference type="Pfam" id="PF02525">
    <property type="entry name" value="Flavodoxin_2"/>
    <property type="match status" value="1"/>
</dbReference>
<dbReference type="SUPFAM" id="SSF52218">
    <property type="entry name" value="Flavoproteins"/>
    <property type="match status" value="1"/>
</dbReference>
<keyword id="KW-0997">Cell inner membrane</keyword>
<keyword id="KW-1003">Cell membrane</keyword>
<keyword id="KW-0285">Flavoprotein</keyword>
<keyword id="KW-0288">FMN</keyword>
<keyword id="KW-0472">Membrane</keyword>
<keyword id="KW-0520">NAD</keyword>
<keyword id="KW-0560">Oxidoreductase</keyword>
<keyword id="KW-1185">Reference proteome</keyword>
<sequence>MILIIYAHPYPHHSHANKRMLEQARTLEGVEIRSLYQLYPDFNIDIAAEQEALSRADLIVWQHPMQWYSIPPLLKLWIDKVFSHGWAYGHGGTALHGKHLLWAVTTGGGESHFEIGAHPGFDVLSQPLQATAIYCGLNWLPPFAMHCTFICDDETLEGQARHYKQRLLEWQEAHHG</sequence>
<proteinExistence type="inferred from homology"/>
<feature type="chain" id="PRO_1000184620" description="Glutathione-regulated potassium-efflux system ancillary protein KefF">
    <location>
        <begin position="1"/>
        <end position="176"/>
    </location>
</feature>
<feature type="binding site" evidence="1">
    <location>
        <position position="8"/>
    </location>
    <ligand>
        <name>FMN</name>
        <dbReference type="ChEBI" id="CHEBI:58210"/>
    </ligand>
</feature>
<feature type="binding site" evidence="1">
    <location>
        <begin position="14"/>
        <end position="17"/>
    </location>
    <ligand>
        <name>FMN</name>
        <dbReference type="ChEBI" id="CHEBI:58210"/>
    </ligand>
</feature>
<feature type="binding site" evidence="1">
    <location>
        <begin position="65"/>
        <end position="68"/>
    </location>
    <ligand>
        <name>FMN</name>
        <dbReference type="ChEBI" id="CHEBI:58210"/>
    </ligand>
</feature>
<feature type="binding site" evidence="1">
    <location>
        <begin position="105"/>
        <end position="108"/>
    </location>
    <ligand>
        <name>FMN</name>
        <dbReference type="ChEBI" id="CHEBI:58210"/>
    </ligand>
</feature>
<name>KEFF_ECO55</name>